<name>RL16_GEOTN</name>
<keyword id="KW-0687">Ribonucleoprotein</keyword>
<keyword id="KW-0689">Ribosomal protein</keyword>
<keyword id="KW-0694">RNA-binding</keyword>
<keyword id="KW-0699">rRNA-binding</keyword>
<keyword id="KW-0820">tRNA-binding</keyword>
<comment type="function">
    <text evidence="1">Binds 23S rRNA and is also seen to make contacts with the A and possibly P site tRNAs.</text>
</comment>
<comment type="subunit">
    <text evidence="1">Part of the 50S ribosomal subunit.</text>
</comment>
<comment type="similarity">
    <text evidence="1">Belongs to the universal ribosomal protein uL16 family.</text>
</comment>
<proteinExistence type="inferred from homology"/>
<feature type="chain" id="PRO_1000054626" description="Large ribosomal subunit protein uL16">
    <location>
        <begin position="1"/>
        <end position="141"/>
    </location>
</feature>
<accession>A4IJJ6</accession>
<protein>
    <recommendedName>
        <fullName evidence="1">Large ribosomal subunit protein uL16</fullName>
    </recommendedName>
    <alternativeName>
        <fullName evidence="2">50S ribosomal protein L16</fullName>
    </alternativeName>
</protein>
<reference key="1">
    <citation type="journal article" date="2007" name="Proc. Natl. Acad. Sci. U.S.A.">
        <title>Genome and proteome of long-chain alkane degrading Geobacillus thermodenitrificans NG80-2 isolated from a deep-subsurface oil reservoir.</title>
        <authorList>
            <person name="Feng L."/>
            <person name="Wang W."/>
            <person name="Cheng J."/>
            <person name="Ren Y."/>
            <person name="Zhao G."/>
            <person name="Gao C."/>
            <person name="Tang Y."/>
            <person name="Liu X."/>
            <person name="Han W."/>
            <person name="Peng X."/>
            <person name="Liu R."/>
            <person name="Wang L."/>
        </authorList>
    </citation>
    <scope>NUCLEOTIDE SEQUENCE [LARGE SCALE GENOMIC DNA]</scope>
    <source>
        <strain>NG80-2</strain>
    </source>
</reference>
<dbReference type="EMBL" id="CP000557">
    <property type="protein sequence ID" value="ABO65500.1"/>
    <property type="molecule type" value="Genomic_DNA"/>
</dbReference>
<dbReference type="RefSeq" id="WP_008881937.1">
    <property type="nucleotide sequence ID" value="NC_009328.1"/>
</dbReference>
<dbReference type="SMR" id="A4IJJ6"/>
<dbReference type="GeneID" id="87622319"/>
<dbReference type="KEGG" id="gtn:GTNG_0113"/>
<dbReference type="eggNOG" id="COG0197">
    <property type="taxonomic scope" value="Bacteria"/>
</dbReference>
<dbReference type="HOGENOM" id="CLU_078858_2_1_9"/>
<dbReference type="Proteomes" id="UP000001578">
    <property type="component" value="Chromosome"/>
</dbReference>
<dbReference type="GO" id="GO:0022625">
    <property type="term" value="C:cytosolic large ribosomal subunit"/>
    <property type="evidence" value="ECO:0007669"/>
    <property type="project" value="TreeGrafter"/>
</dbReference>
<dbReference type="GO" id="GO:0019843">
    <property type="term" value="F:rRNA binding"/>
    <property type="evidence" value="ECO:0007669"/>
    <property type="project" value="UniProtKB-UniRule"/>
</dbReference>
<dbReference type="GO" id="GO:0003735">
    <property type="term" value="F:structural constituent of ribosome"/>
    <property type="evidence" value="ECO:0007669"/>
    <property type="project" value="InterPro"/>
</dbReference>
<dbReference type="GO" id="GO:0000049">
    <property type="term" value="F:tRNA binding"/>
    <property type="evidence" value="ECO:0007669"/>
    <property type="project" value="UniProtKB-KW"/>
</dbReference>
<dbReference type="GO" id="GO:0006412">
    <property type="term" value="P:translation"/>
    <property type="evidence" value="ECO:0007669"/>
    <property type="project" value="UniProtKB-UniRule"/>
</dbReference>
<dbReference type="CDD" id="cd01433">
    <property type="entry name" value="Ribosomal_L16_L10e"/>
    <property type="match status" value="1"/>
</dbReference>
<dbReference type="FunFam" id="3.90.1170.10:FF:000001">
    <property type="entry name" value="50S ribosomal protein L16"/>
    <property type="match status" value="1"/>
</dbReference>
<dbReference type="Gene3D" id="3.90.1170.10">
    <property type="entry name" value="Ribosomal protein L10e/L16"/>
    <property type="match status" value="1"/>
</dbReference>
<dbReference type="HAMAP" id="MF_01342">
    <property type="entry name" value="Ribosomal_uL16"/>
    <property type="match status" value="1"/>
</dbReference>
<dbReference type="InterPro" id="IPR047873">
    <property type="entry name" value="Ribosomal_uL16"/>
</dbReference>
<dbReference type="InterPro" id="IPR000114">
    <property type="entry name" value="Ribosomal_uL16_bact-type"/>
</dbReference>
<dbReference type="InterPro" id="IPR020798">
    <property type="entry name" value="Ribosomal_uL16_CS"/>
</dbReference>
<dbReference type="InterPro" id="IPR016180">
    <property type="entry name" value="Ribosomal_uL16_dom"/>
</dbReference>
<dbReference type="InterPro" id="IPR036920">
    <property type="entry name" value="Ribosomal_uL16_sf"/>
</dbReference>
<dbReference type="NCBIfam" id="TIGR01164">
    <property type="entry name" value="rplP_bact"/>
    <property type="match status" value="1"/>
</dbReference>
<dbReference type="PANTHER" id="PTHR12220">
    <property type="entry name" value="50S/60S RIBOSOMAL PROTEIN L16"/>
    <property type="match status" value="1"/>
</dbReference>
<dbReference type="PANTHER" id="PTHR12220:SF13">
    <property type="entry name" value="LARGE RIBOSOMAL SUBUNIT PROTEIN UL16M"/>
    <property type="match status" value="1"/>
</dbReference>
<dbReference type="Pfam" id="PF00252">
    <property type="entry name" value="Ribosomal_L16"/>
    <property type="match status" value="1"/>
</dbReference>
<dbReference type="PRINTS" id="PR00060">
    <property type="entry name" value="RIBOSOMALL16"/>
</dbReference>
<dbReference type="SUPFAM" id="SSF54686">
    <property type="entry name" value="Ribosomal protein L16p/L10e"/>
    <property type="match status" value="1"/>
</dbReference>
<dbReference type="PROSITE" id="PS00586">
    <property type="entry name" value="RIBOSOMAL_L16_1"/>
    <property type="match status" value="1"/>
</dbReference>
<dbReference type="PROSITE" id="PS00701">
    <property type="entry name" value="RIBOSOMAL_L16_2"/>
    <property type="match status" value="1"/>
</dbReference>
<evidence type="ECO:0000255" key="1">
    <source>
        <dbReference type="HAMAP-Rule" id="MF_01342"/>
    </source>
</evidence>
<evidence type="ECO:0000305" key="2"/>
<gene>
    <name evidence="1" type="primary">rplP</name>
    <name type="ordered locus">GTNG_0113</name>
</gene>
<organism>
    <name type="scientific">Geobacillus thermodenitrificans (strain NG80-2)</name>
    <dbReference type="NCBI Taxonomy" id="420246"/>
    <lineage>
        <taxon>Bacteria</taxon>
        <taxon>Bacillati</taxon>
        <taxon>Bacillota</taxon>
        <taxon>Bacilli</taxon>
        <taxon>Bacillales</taxon>
        <taxon>Anoxybacillaceae</taxon>
        <taxon>Geobacillus</taxon>
    </lineage>
</organism>
<sequence length="141" mass="15911">MLMPKRVKYRREHRGRMKGRAKGGTEVHFGEFGLQALESAWITNRQIEAARRAMTRYMKRGGKVWIRIFPSKPYTAKPLEVRMGSGKGAPEGWVAVVKPGKVMFEVAGVSEEVAREALRLASHKLPIKCKFVKREETGGEA</sequence>